<geneLocation type="plasmid">
    <name>pOJ159</name>
</geneLocation>
<proteinExistence type="evidence at transcript level"/>
<comment type="function">
    <text>Probable RNA methylase. Confers resistance to carbomycin and several other macrolides, lincomycin and vernamycin B, but not to all macrolide-lincosamide-streptogramin B antibiotics.</text>
</comment>
<comment type="induction">
    <text>By certain macrolide antibiotics.</text>
</comment>
<comment type="similarity">
    <text evidence="1">Belongs to the class I-like SAM-binding methyltransferase superfamily. rRNA adenine N(6)-methyltransferase family.</text>
</comment>
<sequence>MAALLKRILRRRMAEKRSGRGRMAAARTTGAQSRKTAQRSGRSEADRRRRVHGQNFLVDRETVQRFVRFADPDPGEVVLEVGAGNGAITRELARLCRRVVAYEIDRHFADRLREATAEDPRIEVVAGDFLKTSQPKVPFSVVGNIPFGNTADIVDWCLNARRLRTTTLVTQLEYARKRTGGYRRWSRLTVATWPEVEWRMGERISRRWFRPVPAVDSAVLRLERRPVPLIPPGLMHDFRDLVETGFTGKGGSLDASLRRRFPARRVAAGFRRARLEQGVVVAYVTPGQWITLFEELHGR</sequence>
<organism>
    <name type="scientific">Streptomyces thermotolerans</name>
    <dbReference type="NCBI Taxonomy" id="80858"/>
    <lineage>
        <taxon>Bacteria</taxon>
        <taxon>Bacillati</taxon>
        <taxon>Actinomycetota</taxon>
        <taxon>Actinomycetes</taxon>
        <taxon>Kitasatosporales</taxon>
        <taxon>Streptomycetaceae</taxon>
        <taxon>Streptomyces</taxon>
    </lineage>
</organism>
<keyword id="KW-0046">Antibiotic resistance</keyword>
<keyword id="KW-0489">Methyltransferase</keyword>
<keyword id="KW-0614">Plasmid</keyword>
<keyword id="KW-0694">RNA-binding</keyword>
<keyword id="KW-0949">S-adenosyl-L-methionine</keyword>
<keyword id="KW-0808">Transferase</keyword>
<reference key="1">
    <citation type="journal article" date="1987" name="Gene">
        <title>Cloning and nucleotide sequence of a carbomycin-resistance gene from Streptomyces thermotolerans.</title>
        <authorList>
            <person name="Epp J.K."/>
            <person name="Burgett S.G."/>
            <person name="Schoner B.E."/>
        </authorList>
    </citation>
    <scope>NUCLEOTIDE SEQUENCE [GENOMIC DNA]</scope>
    <source>
        <strain>ATCC 11416 / CBS 960.69 / DSM 40277 / JCM 4519 / NBRC 13088 / NRRL B-2345 / VKM Ac-1821</strain>
    </source>
</reference>
<name>CARB_STRTH</name>
<protein>
    <recommendedName>
        <fullName>rRNA methyltransferase</fullName>
        <ecNumber>2.1.1.-</ecNumber>
    </recommendedName>
    <alternativeName>
        <fullName>Carbomycin-resistance protein</fullName>
    </alternativeName>
</protein>
<gene>
    <name type="primary">carB</name>
</gene>
<feature type="chain" id="PRO_0000101692" description="rRNA methyltransferase">
    <location>
        <begin position="1"/>
        <end position="299"/>
    </location>
</feature>
<feature type="region of interest" description="Disordered" evidence="2">
    <location>
        <begin position="14"/>
        <end position="53"/>
    </location>
</feature>
<feature type="compositionally biased region" description="Low complexity" evidence="2">
    <location>
        <begin position="21"/>
        <end position="31"/>
    </location>
</feature>
<feature type="binding site" evidence="1">
    <location>
        <position position="55"/>
    </location>
    <ligand>
        <name>S-adenosyl-L-methionine</name>
        <dbReference type="ChEBI" id="CHEBI:59789"/>
    </ligand>
</feature>
<feature type="binding site" evidence="1">
    <location>
        <position position="57"/>
    </location>
    <ligand>
        <name>S-adenosyl-L-methionine</name>
        <dbReference type="ChEBI" id="CHEBI:59789"/>
    </ligand>
</feature>
<feature type="binding site" evidence="1">
    <location>
        <position position="82"/>
    </location>
    <ligand>
        <name>S-adenosyl-L-methionine</name>
        <dbReference type="ChEBI" id="CHEBI:59789"/>
    </ligand>
</feature>
<feature type="binding site" evidence="1">
    <location>
        <position position="103"/>
    </location>
    <ligand>
        <name>S-adenosyl-L-methionine</name>
        <dbReference type="ChEBI" id="CHEBI:59789"/>
    </ligand>
</feature>
<feature type="binding site" evidence="1">
    <location>
        <position position="128"/>
    </location>
    <ligand>
        <name>S-adenosyl-L-methionine</name>
        <dbReference type="ChEBI" id="CHEBI:59789"/>
    </ligand>
</feature>
<feature type="binding site" evidence="1">
    <location>
        <position position="144"/>
    </location>
    <ligand>
        <name>S-adenosyl-L-methionine</name>
        <dbReference type="ChEBI" id="CHEBI:59789"/>
    </ligand>
</feature>
<accession>P13079</accession>
<dbReference type="EC" id="2.1.1.-"/>
<dbReference type="EMBL" id="M16503">
    <property type="protein sequence ID" value="AAC32026.1"/>
    <property type="molecule type" value="Genomic_DNA"/>
</dbReference>
<dbReference type="RefSeq" id="WP_063844794.1">
    <property type="nucleotide sequence ID" value="NG_047830.1"/>
</dbReference>
<dbReference type="SMR" id="P13079"/>
<dbReference type="CARD" id="ARO:3002823">
    <property type="molecule name" value="ErmH"/>
    <property type="mechanism identifier" value="ARO:0001001"/>
    <property type="mechanism name" value="antibiotic target alteration"/>
</dbReference>
<dbReference type="KEGG" id="ag:AAC32026"/>
<dbReference type="GO" id="GO:0005829">
    <property type="term" value="C:cytosol"/>
    <property type="evidence" value="ECO:0007669"/>
    <property type="project" value="TreeGrafter"/>
</dbReference>
<dbReference type="GO" id="GO:0003723">
    <property type="term" value="F:RNA binding"/>
    <property type="evidence" value="ECO:0007669"/>
    <property type="project" value="UniProtKB-KW"/>
</dbReference>
<dbReference type="GO" id="GO:0000179">
    <property type="term" value="F:rRNA (adenine-N6,N6-)-dimethyltransferase activity"/>
    <property type="evidence" value="ECO:0007669"/>
    <property type="project" value="InterPro"/>
</dbReference>
<dbReference type="GO" id="GO:0046677">
    <property type="term" value="P:response to antibiotic"/>
    <property type="evidence" value="ECO:0007669"/>
    <property type="project" value="UniProtKB-KW"/>
</dbReference>
<dbReference type="CDD" id="cd02440">
    <property type="entry name" value="AdoMet_MTases"/>
    <property type="match status" value="1"/>
</dbReference>
<dbReference type="Gene3D" id="1.10.8.100">
    <property type="entry name" value="Ribosomal RNA adenine dimethylase-like, domain 2"/>
    <property type="match status" value="1"/>
</dbReference>
<dbReference type="Gene3D" id="3.40.50.150">
    <property type="entry name" value="Vaccinia Virus protein VP39"/>
    <property type="match status" value="1"/>
</dbReference>
<dbReference type="InterPro" id="IPR001737">
    <property type="entry name" value="KsgA/Erm"/>
</dbReference>
<dbReference type="InterPro" id="IPR023165">
    <property type="entry name" value="rRNA_Ade_diMease-like_C"/>
</dbReference>
<dbReference type="InterPro" id="IPR020596">
    <property type="entry name" value="rRNA_Ade_Mease_Trfase_CS"/>
</dbReference>
<dbReference type="InterPro" id="IPR020598">
    <property type="entry name" value="rRNA_Ade_methylase_Trfase_N"/>
</dbReference>
<dbReference type="InterPro" id="IPR029063">
    <property type="entry name" value="SAM-dependent_MTases_sf"/>
</dbReference>
<dbReference type="NCBIfam" id="NF000499">
    <property type="entry name" value="Erm23S_rRNA_broad"/>
    <property type="match status" value="1"/>
</dbReference>
<dbReference type="NCBIfam" id="NF000337">
    <property type="entry name" value="erm_SHROVE"/>
    <property type="match status" value="1"/>
</dbReference>
<dbReference type="PANTHER" id="PTHR11727">
    <property type="entry name" value="DIMETHYLADENOSINE TRANSFERASE"/>
    <property type="match status" value="1"/>
</dbReference>
<dbReference type="PANTHER" id="PTHR11727:SF7">
    <property type="entry name" value="DIMETHYLADENOSINE TRANSFERASE-RELATED"/>
    <property type="match status" value="1"/>
</dbReference>
<dbReference type="Pfam" id="PF00398">
    <property type="entry name" value="RrnaAD"/>
    <property type="match status" value="1"/>
</dbReference>
<dbReference type="SMART" id="SM00650">
    <property type="entry name" value="rADc"/>
    <property type="match status" value="1"/>
</dbReference>
<dbReference type="SUPFAM" id="SSF53335">
    <property type="entry name" value="S-adenosyl-L-methionine-dependent methyltransferases"/>
    <property type="match status" value="1"/>
</dbReference>
<dbReference type="PROSITE" id="PS01131">
    <property type="entry name" value="RRNA_A_DIMETH"/>
    <property type="match status" value="1"/>
</dbReference>
<dbReference type="PROSITE" id="PS51689">
    <property type="entry name" value="SAM_RNA_A_N6_MT"/>
    <property type="match status" value="1"/>
</dbReference>
<evidence type="ECO:0000255" key="1">
    <source>
        <dbReference type="PROSITE-ProRule" id="PRU01026"/>
    </source>
</evidence>
<evidence type="ECO:0000256" key="2">
    <source>
        <dbReference type="SAM" id="MobiDB-lite"/>
    </source>
</evidence>